<sequence length="306" mass="34557">MALRHFLTLRDLSTLELNRILERASELKKMQQSNKVYQPFVGKVLGMIFEKSSTRTRISFEAGINQFGGSAIFLSPRDTQLGRGEPIEDSARVISSMLDIVMIRTFGHDIVERFASYSKVPVINGLTDDHHPCQLLADLQTYIEHRGSIEGKTVAWIGDGNNMCNSYIEAAHMMGFKLKIASPKGYEPKPEFLAEFGHCVELFDNAEDAAVNADLIVTDVWASMGQEEEQKLREKAFADFQVNEKLMGLAHPDCLFMHCLPAHRGEEISETMLDHKNAVVWDEAENRLHAQKALMEFLLNENLKKA</sequence>
<reference key="1">
    <citation type="journal article" date="2007" name="Genes Dev.">
        <title>New insights into Acinetobacter baumannii pathogenesis revealed by high-density pyrosequencing and transposon mutagenesis.</title>
        <authorList>
            <person name="Smith M.G."/>
            <person name="Gianoulis T.A."/>
            <person name="Pukatzki S."/>
            <person name="Mekalanos J.J."/>
            <person name="Ornston L.N."/>
            <person name="Gerstein M."/>
            <person name="Snyder M."/>
        </authorList>
    </citation>
    <scope>NUCLEOTIDE SEQUENCE [LARGE SCALE GENOMIC DNA]</scope>
    <source>
        <strain>ATCC 17978 / DSM 105126 / CIP 53.77 / LMG 1025 / NCDC KC755 / 5377</strain>
    </source>
</reference>
<comment type="function">
    <text evidence="1">Reversibly catalyzes the transfer of the carbamoyl group from carbamoyl phosphate (CP) to the N(epsilon) atom of ornithine (ORN) to produce L-citrulline.</text>
</comment>
<comment type="catalytic activity">
    <reaction evidence="2">
        <text>carbamoyl phosphate + L-ornithine = L-citrulline + phosphate + H(+)</text>
        <dbReference type="Rhea" id="RHEA:19513"/>
        <dbReference type="ChEBI" id="CHEBI:15378"/>
        <dbReference type="ChEBI" id="CHEBI:43474"/>
        <dbReference type="ChEBI" id="CHEBI:46911"/>
        <dbReference type="ChEBI" id="CHEBI:57743"/>
        <dbReference type="ChEBI" id="CHEBI:58228"/>
        <dbReference type="EC" id="2.1.3.3"/>
    </reaction>
</comment>
<comment type="pathway">
    <text evidence="2">Amino-acid biosynthesis; L-arginine biosynthesis; L-arginine from L-ornithine and carbamoyl phosphate: step 1/3.</text>
</comment>
<comment type="subcellular location">
    <subcellularLocation>
        <location evidence="2">Cytoplasm</location>
    </subcellularLocation>
</comment>
<comment type="similarity">
    <text evidence="2">Belongs to the aspartate/ornithine carbamoyltransferase superfamily. OTCase family.</text>
</comment>
<dbReference type="EC" id="2.1.3.3" evidence="2"/>
<dbReference type="EMBL" id="CP000521">
    <property type="protein sequence ID" value="ABO12407.2"/>
    <property type="molecule type" value="Genomic_DNA"/>
</dbReference>
<dbReference type="RefSeq" id="WP_001207983.1">
    <property type="nucleotide sequence ID" value="NZ_CP053098.1"/>
</dbReference>
<dbReference type="SMR" id="A3M663"/>
<dbReference type="GeneID" id="92894242"/>
<dbReference type="KEGG" id="acb:A1S_1980"/>
<dbReference type="HOGENOM" id="CLU_043846_3_2_6"/>
<dbReference type="UniPathway" id="UPA00068">
    <property type="reaction ID" value="UER00112"/>
</dbReference>
<dbReference type="GO" id="GO:0005737">
    <property type="term" value="C:cytoplasm"/>
    <property type="evidence" value="ECO:0007669"/>
    <property type="project" value="UniProtKB-SubCell"/>
</dbReference>
<dbReference type="GO" id="GO:0016597">
    <property type="term" value="F:amino acid binding"/>
    <property type="evidence" value="ECO:0007669"/>
    <property type="project" value="InterPro"/>
</dbReference>
<dbReference type="GO" id="GO:0004585">
    <property type="term" value="F:ornithine carbamoyltransferase activity"/>
    <property type="evidence" value="ECO:0007669"/>
    <property type="project" value="UniProtKB-UniRule"/>
</dbReference>
<dbReference type="GO" id="GO:0042450">
    <property type="term" value="P:arginine biosynthetic process via ornithine"/>
    <property type="evidence" value="ECO:0007669"/>
    <property type="project" value="TreeGrafter"/>
</dbReference>
<dbReference type="GO" id="GO:0019240">
    <property type="term" value="P:citrulline biosynthetic process"/>
    <property type="evidence" value="ECO:0007669"/>
    <property type="project" value="TreeGrafter"/>
</dbReference>
<dbReference type="GO" id="GO:0006526">
    <property type="term" value="P:L-arginine biosynthetic process"/>
    <property type="evidence" value="ECO:0007669"/>
    <property type="project" value="UniProtKB-UniRule"/>
</dbReference>
<dbReference type="FunFam" id="3.40.50.1370:FF:000008">
    <property type="entry name" value="Ornithine carbamoyltransferase"/>
    <property type="match status" value="1"/>
</dbReference>
<dbReference type="Gene3D" id="3.40.50.1370">
    <property type="entry name" value="Aspartate/ornithine carbamoyltransferase"/>
    <property type="match status" value="2"/>
</dbReference>
<dbReference type="HAMAP" id="MF_01109">
    <property type="entry name" value="OTCase"/>
    <property type="match status" value="1"/>
</dbReference>
<dbReference type="InterPro" id="IPR006132">
    <property type="entry name" value="Asp/Orn_carbamoyltranf_P-bd"/>
</dbReference>
<dbReference type="InterPro" id="IPR006130">
    <property type="entry name" value="Asp/Orn_carbamoylTrfase"/>
</dbReference>
<dbReference type="InterPro" id="IPR036901">
    <property type="entry name" value="Asp/Orn_carbamoylTrfase_sf"/>
</dbReference>
<dbReference type="InterPro" id="IPR006131">
    <property type="entry name" value="Asp_carbamoyltransf_Asp/Orn-bd"/>
</dbReference>
<dbReference type="InterPro" id="IPR002292">
    <property type="entry name" value="Orn/put_carbamltrans"/>
</dbReference>
<dbReference type="InterPro" id="IPR024904">
    <property type="entry name" value="OTCase_ArgI"/>
</dbReference>
<dbReference type="NCBIfam" id="TIGR00658">
    <property type="entry name" value="orni_carb_tr"/>
    <property type="match status" value="1"/>
</dbReference>
<dbReference type="NCBIfam" id="NF001986">
    <property type="entry name" value="PRK00779.1"/>
    <property type="match status" value="1"/>
</dbReference>
<dbReference type="PANTHER" id="PTHR45753">
    <property type="entry name" value="ORNITHINE CARBAMOYLTRANSFERASE, MITOCHONDRIAL"/>
    <property type="match status" value="1"/>
</dbReference>
<dbReference type="PANTHER" id="PTHR45753:SF3">
    <property type="entry name" value="ORNITHINE TRANSCARBAMYLASE, MITOCHONDRIAL"/>
    <property type="match status" value="1"/>
</dbReference>
<dbReference type="Pfam" id="PF00185">
    <property type="entry name" value="OTCace"/>
    <property type="match status" value="1"/>
</dbReference>
<dbReference type="Pfam" id="PF02729">
    <property type="entry name" value="OTCace_N"/>
    <property type="match status" value="1"/>
</dbReference>
<dbReference type="PRINTS" id="PR00100">
    <property type="entry name" value="AOTCASE"/>
</dbReference>
<dbReference type="PRINTS" id="PR00102">
    <property type="entry name" value="OTCASE"/>
</dbReference>
<dbReference type="SUPFAM" id="SSF53671">
    <property type="entry name" value="Aspartate/ornithine carbamoyltransferase"/>
    <property type="match status" value="1"/>
</dbReference>
<dbReference type="PROSITE" id="PS00097">
    <property type="entry name" value="CARBAMOYLTRANSFERASE"/>
    <property type="match status" value="1"/>
</dbReference>
<keyword id="KW-0028">Amino-acid biosynthesis</keyword>
<keyword id="KW-0055">Arginine biosynthesis</keyword>
<keyword id="KW-0963">Cytoplasm</keyword>
<keyword id="KW-0808">Transferase</keyword>
<proteinExistence type="inferred from homology"/>
<gene>
    <name evidence="2" type="primary">argF</name>
    <name type="ordered locus">A1S_1980</name>
</gene>
<protein>
    <recommendedName>
        <fullName evidence="2">Ornithine carbamoyltransferase</fullName>
        <shortName evidence="2">OTCase</shortName>
        <ecNumber evidence="2">2.1.3.3</ecNumber>
    </recommendedName>
</protein>
<evidence type="ECO:0000250" key="1"/>
<evidence type="ECO:0000255" key="2">
    <source>
        <dbReference type="HAMAP-Rule" id="MF_01109"/>
    </source>
</evidence>
<organism>
    <name type="scientific">Acinetobacter baumannii (strain ATCC 17978 / DSM 105126 / CIP 53.77 / LMG 1025 / NCDC KC755 / 5377)</name>
    <dbReference type="NCBI Taxonomy" id="400667"/>
    <lineage>
        <taxon>Bacteria</taxon>
        <taxon>Pseudomonadati</taxon>
        <taxon>Pseudomonadota</taxon>
        <taxon>Gammaproteobacteria</taxon>
        <taxon>Moraxellales</taxon>
        <taxon>Moraxellaceae</taxon>
        <taxon>Acinetobacter</taxon>
        <taxon>Acinetobacter calcoaceticus/baumannii complex</taxon>
    </lineage>
</organism>
<name>OTC_ACIBT</name>
<feature type="chain" id="PRO_1000137083" description="Ornithine carbamoyltransferase">
    <location>
        <begin position="1"/>
        <end position="306"/>
    </location>
</feature>
<feature type="binding site" evidence="2">
    <location>
        <begin position="53"/>
        <end position="56"/>
    </location>
    <ligand>
        <name>carbamoyl phosphate</name>
        <dbReference type="ChEBI" id="CHEBI:58228"/>
    </ligand>
</feature>
<feature type="binding site" evidence="2">
    <location>
        <position position="80"/>
    </location>
    <ligand>
        <name>carbamoyl phosphate</name>
        <dbReference type="ChEBI" id="CHEBI:58228"/>
    </ligand>
</feature>
<feature type="binding site" evidence="2">
    <location>
        <position position="104"/>
    </location>
    <ligand>
        <name>carbamoyl phosphate</name>
        <dbReference type="ChEBI" id="CHEBI:58228"/>
    </ligand>
</feature>
<feature type="binding site" evidence="2">
    <location>
        <begin position="131"/>
        <end position="134"/>
    </location>
    <ligand>
        <name>carbamoyl phosphate</name>
        <dbReference type="ChEBI" id="CHEBI:58228"/>
    </ligand>
</feature>
<feature type="binding site" evidence="2">
    <location>
        <position position="162"/>
    </location>
    <ligand>
        <name>L-ornithine</name>
        <dbReference type="ChEBI" id="CHEBI:46911"/>
    </ligand>
</feature>
<feature type="binding site" evidence="2">
    <location>
        <position position="219"/>
    </location>
    <ligand>
        <name>L-ornithine</name>
        <dbReference type="ChEBI" id="CHEBI:46911"/>
    </ligand>
</feature>
<feature type="binding site" evidence="2">
    <location>
        <begin position="223"/>
        <end position="224"/>
    </location>
    <ligand>
        <name>L-ornithine</name>
        <dbReference type="ChEBI" id="CHEBI:46911"/>
    </ligand>
</feature>
<feature type="binding site" evidence="2">
    <location>
        <begin position="259"/>
        <end position="260"/>
    </location>
    <ligand>
        <name>carbamoyl phosphate</name>
        <dbReference type="ChEBI" id="CHEBI:58228"/>
    </ligand>
</feature>
<feature type="binding site" evidence="2">
    <location>
        <position position="287"/>
    </location>
    <ligand>
        <name>carbamoyl phosphate</name>
        <dbReference type="ChEBI" id="CHEBI:58228"/>
    </ligand>
</feature>
<accession>A3M663</accession>